<dbReference type="EC" id="2.5.1.145" evidence="1"/>
<dbReference type="EMBL" id="CP000361">
    <property type="protein sequence ID" value="ABV67524.1"/>
    <property type="molecule type" value="Genomic_DNA"/>
</dbReference>
<dbReference type="RefSeq" id="WP_012012943.1">
    <property type="nucleotide sequence ID" value="NC_009850.1"/>
</dbReference>
<dbReference type="SMR" id="A8EUA0"/>
<dbReference type="STRING" id="367737.Abu_1267"/>
<dbReference type="GeneID" id="24305444"/>
<dbReference type="KEGG" id="abu:Abu_1267"/>
<dbReference type="eggNOG" id="COG0682">
    <property type="taxonomic scope" value="Bacteria"/>
</dbReference>
<dbReference type="HOGENOM" id="CLU_013386_1_2_7"/>
<dbReference type="UniPathway" id="UPA00664"/>
<dbReference type="Proteomes" id="UP000001136">
    <property type="component" value="Chromosome"/>
</dbReference>
<dbReference type="GO" id="GO:0005886">
    <property type="term" value="C:plasma membrane"/>
    <property type="evidence" value="ECO:0007669"/>
    <property type="project" value="UniProtKB-SubCell"/>
</dbReference>
<dbReference type="GO" id="GO:0008961">
    <property type="term" value="F:phosphatidylglycerol-prolipoprotein diacylglyceryl transferase activity"/>
    <property type="evidence" value="ECO:0007669"/>
    <property type="project" value="UniProtKB-UniRule"/>
</dbReference>
<dbReference type="GO" id="GO:0042158">
    <property type="term" value="P:lipoprotein biosynthetic process"/>
    <property type="evidence" value="ECO:0007669"/>
    <property type="project" value="UniProtKB-UniRule"/>
</dbReference>
<dbReference type="HAMAP" id="MF_01147">
    <property type="entry name" value="Lgt"/>
    <property type="match status" value="1"/>
</dbReference>
<dbReference type="InterPro" id="IPR001640">
    <property type="entry name" value="Lgt"/>
</dbReference>
<dbReference type="NCBIfam" id="TIGR00544">
    <property type="entry name" value="lgt"/>
    <property type="match status" value="1"/>
</dbReference>
<dbReference type="PANTHER" id="PTHR30589:SF0">
    <property type="entry name" value="PHOSPHATIDYLGLYCEROL--PROLIPOPROTEIN DIACYLGLYCERYL TRANSFERASE"/>
    <property type="match status" value="1"/>
</dbReference>
<dbReference type="PANTHER" id="PTHR30589">
    <property type="entry name" value="PROLIPOPROTEIN DIACYLGLYCERYL TRANSFERASE"/>
    <property type="match status" value="1"/>
</dbReference>
<dbReference type="Pfam" id="PF01790">
    <property type="entry name" value="LGT"/>
    <property type="match status" value="1"/>
</dbReference>
<dbReference type="PROSITE" id="PS01311">
    <property type="entry name" value="LGT"/>
    <property type="match status" value="1"/>
</dbReference>
<protein>
    <recommendedName>
        <fullName evidence="1">Phosphatidylglycerol--prolipoprotein diacylglyceryl transferase</fullName>
        <ecNumber evidence="1">2.5.1.145</ecNumber>
    </recommendedName>
</protein>
<comment type="function">
    <text evidence="1">Catalyzes the transfer of the diacylglyceryl group from phosphatidylglycerol to the sulfhydryl group of the N-terminal cysteine of a prolipoprotein, the first step in the formation of mature lipoproteins.</text>
</comment>
<comment type="catalytic activity">
    <reaction evidence="1">
        <text>L-cysteinyl-[prolipoprotein] + a 1,2-diacyl-sn-glycero-3-phospho-(1'-sn-glycerol) = an S-1,2-diacyl-sn-glyceryl-L-cysteinyl-[prolipoprotein] + sn-glycerol 1-phosphate + H(+)</text>
        <dbReference type="Rhea" id="RHEA:56712"/>
        <dbReference type="Rhea" id="RHEA-COMP:14679"/>
        <dbReference type="Rhea" id="RHEA-COMP:14680"/>
        <dbReference type="ChEBI" id="CHEBI:15378"/>
        <dbReference type="ChEBI" id="CHEBI:29950"/>
        <dbReference type="ChEBI" id="CHEBI:57685"/>
        <dbReference type="ChEBI" id="CHEBI:64716"/>
        <dbReference type="ChEBI" id="CHEBI:140658"/>
        <dbReference type="EC" id="2.5.1.145"/>
    </reaction>
</comment>
<comment type="pathway">
    <text evidence="1">Protein modification; lipoprotein biosynthesis (diacylglyceryl transfer).</text>
</comment>
<comment type="subcellular location">
    <subcellularLocation>
        <location evidence="1">Cell inner membrane</location>
        <topology evidence="1">Multi-pass membrane protein</topology>
    </subcellularLocation>
</comment>
<comment type="similarity">
    <text evidence="1">Belongs to the Lgt family.</text>
</comment>
<name>LGT_ALIB4</name>
<organism>
    <name type="scientific">Aliarcobacter butzleri (strain RM4018)</name>
    <name type="common">Arcobacter butzleri</name>
    <dbReference type="NCBI Taxonomy" id="367737"/>
    <lineage>
        <taxon>Bacteria</taxon>
        <taxon>Pseudomonadati</taxon>
        <taxon>Campylobacterota</taxon>
        <taxon>Epsilonproteobacteria</taxon>
        <taxon>Campylobacterales</taxon>
        <taxon>Arcobacteraceae</taxon>
        <taxon>Aliarcobacter</taxon>
    </lineage>
</organism>
<feature type="chain" id="PRO_1000065471" description="Phosphatidylglycerol--prolipoprotein diacylglyceryl transferase">
    <location>
        <begin position="1"/>
        <end position="272"/>
    </location>
</feature>
<feature type="transmembrane region" description="Helical" evidence="1">
    <location>
        <begin position="21"/>
        <end position="41"/>
    </location>
</feature>
<feature type="transmembrane region" description="Helical" evidence="1">
    <location>
        <begin position="60"/>
        <end position="80"/>
    </location>
</feature>
<feature type="transmembrane region" description="Helical" evidence="1">
    <location>
        <begin position="101"/>
        <end position="121"/>
    </location>
</feature>
<feature type="transmembrane region" description="Helical" evidence="1">
    <location>
        <begin position="131"/>
        <end position="151"/>
    </location>
</feature>
<feature type="transmembrane region" description="Helical" evidence="1">
    <location>
        <begin position="181"/>
        <end position="201"/>
    </location>
</feature>
<feature type="transmembrane region" description="Helical" evidence="1">
    <location>
        <begin position="209"/>
        <end position="229"/>
    </location>
</feature>
<feature type="transmembrane region" description="Helical" evidence="1">
    <location>
        <begin position="244"/>
        <end position="264"/>
    </location>
</feature>
<feature type="binding site" evidence="1">
    <location>
        <position position="152"/>
    </location>
    <ligand>
        <name>a 1,2-diacyl-sn-glycero-3-phospho-(1'-sn-glycerol)</name>
        <dbReference type="ChEBI" id="CHEBI:64716"/>
    </ligand>
</feature>
<keyword id="KW-0997">Cell inner membrane</keyword>
<keyword id="KW-1003">Cell membrane</keyword>
<keyword id="KW-0472">Membrane</keyword>
<keyword id="KW-1185">Reference proteome</keyword>
<keyword id="KW-0808">Transferase</keyword>
<keyword id="KW-0812">Transmembrane</keyword>
<keyword id="KW-1133">Transmembrane helix</keyword>
<sequence length="272" mass="31360">MEFWQNIYSHFNPVAFNLGSIAVHWYGIMYALALLSAIFVAKWFIKHDKLAISNDLFDSYIWWAEIGVILGARLGYVLFYDSHTMYYITHPWQIFNPYINGVYAGISGMSYHGAFFGFIIASYLFCRKNKVSFWFITDIAVLGVSAAYIFGRLGNFFNQELIGRVTDVPWGIYVGGVLRHPSQIYEAILEGLFVFLILAFYRKRKTFDGQLALMYGILYAIARIIAEFFRQPDSQLGFLVGEWLTMGILQSLIILIICVGFYVVRRKIIIKN</sequence>
<accession>A8EUA0</accession>
<evidence type="ECO:0000255" key="1">
    <source>
        <dbReference type="HAMAP-Rule" id="MF_01147"/>
    </source>
</evidence>
<proteinExistence type="inferred from homology"/>
<gene>
    <name evidence="1" type="primary">lgt</name>
    <name type="ordered locus">Abu_1267</name>
</gene>
<reference key="1">
    <citation type="journal article" date="2007" name="PLoS ONE">
        <title>The complete genome sequence and analysis of the Epsilonproteobacterium Arcobacter butzleri.</title>
        <authorList>
            <person name="Miller W.G."/>
            <person name="Parker C.T."/>
            <person name="Rubenfield M."/>
            <person name="Mendz G.L."/>
            <person name="Woesten M.M.S.M."/>
            <person name="Ussery D.W."/>
            <person name="Stolz J.F."/>
            <person name="Binnewies T.T."/>
            <person name="Hallin P.F."/>
            <person name="Wang G."/>
            <person name="Malek J.A."/>
            <person name="Rogosin A."/>
            <person name="Stanker L.H."/>
            <person name="Mandrell R.E."/>
        </authorList>
    </citation>
    <scope>NUCLEOTIDE SEQUENCE [LARGE SCALE GENOMIC DNA]</scope>
    <source>
        <strain>RM4018</strain>
    </source>
</reference>